<sequence>MGTFLLLMAEASAVGGELAEGGAEGGFGLNTNILDTNLINLAIIITVLFVFGRKVLGNTLKTRRENIETAIKNAEQRAADAAKQLKEAQQKLEQAQAEAERIKKSAQDNAQTAGQAILAQAAVDIERLQEAGAADLNAELDRAIAQLRQRVVALALQKVESELQGGIADDAQKILIDRSIAQLGGEV</sequence>
<comment type="function">
    <text evidence="1">F(1)F(0) ATP synthase produces ATP from ADP in the presence of a proton or sodium gradient. F-type ATPases consist of two structural domains, F(1) containing the extramembraneous catalytic core and F(0) containing the membrane proton channel, linked together by a central stalk and a peripheral stalk. During catalysis, ATP synthesis in the catalytic domain of F(1) is coupled via a rotary mechanism of the central stalk subunits to proton translocation.</text>
</comment>
<comment type="function">
    <text evidence="1">Component of the F(0) channel, it forms part of the peripheral stalk, linking F(1) to F(0).</text>
</comment>
<comment type="subunit">
    <text evidence="1">F-type ATPases have 2 components, F(1) - the catalytic core - and F(0) - the membrane proton channel. F(1) has five subunits: alpha(3), beta(3), gamma(1), delta(1), epsilon(1). F(0) has four main subunits: a(1), b(1), b'(1) and c(10-14). The alpha and beta chains form an alternating ring which encloses part of the gamma chain. F(1) is attached to F(0) by a central stalk formed by the gamma and epsilon chains, while a peripheral stalk is formed by the delta, b and b' chains.</text>
</comment>
<comment type="subcellular location">
    <subcellularLocation>
        <location evidence="1">Cellular thylakoid membrane</location>
        <topology evidence="1">Single-pass membrane protein</topology>
    </subcellularLocation>
</comment>
<comment type="similarity">
    <text evidence="1">Belongs to the ATPase B chain family.</text>
</comment>
<reference key="1">
    <citation type="journal article" date="2014" name="Stand. Genomic Sci.">
        <title>Complete genome sequence of Anabaena variabilis ATCC 29413.</title>
        <authorList>
            <person name="Thiel T."/>
            <person name="Pratte B.S."/>
            <person name="Zhong J."/>
            <person name="Goodwin L."/>
            <person name="Copeland A."/>
            <person name="Lucas S."/>
            <person name="Han C."/>
            <person name="Pitluck S."/>
            <person name="Land M.L."/>
            <person name="Kyrpides N.C."/>
            <person name="Woyke T."/>
        </authorList>
    </citation>
    <scope>NUCLEOTIDE SEQUENCE [LARGE SCALE GENOMIC DNA]</scope>
    <source>
        <strain>ATCC 29413 / PCC 7937</strain>
    </source>
</reference>
<feature type="chain" id="PRO_0000368309" description="ATP synthase subunit b">
    <location>
        <begin position="1"/>
        <end position="187"/>
    </location>
</feature>
<feature type="transmembrane region" description="Helical" evidence="1">
    <location>
        <begin position="32"/>
        <end position="52"/>
    </location>
</feature>
<name>ATPF_TRIV2</name>
<proteinExistence type="inferred from homology"/>
<accession>Q3M9V8</accession>
<keyword id="KW-0066">ATP synthesis</keyword>
<keyword id="KW-0138">CF(0)</keyword>
<keyword id="KW-0375">Hydrogen ion transport</keyword>
<keyword id="KW-0406">Ion transport</keyword>
<keyword id="KW-0472">Membrane</keyword>
<keyword id="KW-0793">Thylakoid</keyword>
<keyword id="KW-0812">Transmembrane</keyword>
<keyword id="KW-1133">Transmembrane helix</keyword>
<keyword id="KW-0813">Transport</keyword>
<evidence type="ECO:0000255" key="1">
    <source>
        <dbReference type="HAMAP-Rule" id="MF_01398"/>
    </source>
</evidence>
<protein>
    <recommendedName>
        <fullName evidence="1">ATP synthase subunit b</fullName>
    </recommendedName>
    <alternativeName>
        <fullName evidence="1">ATP synthase F(0) sector subunit b</fullName>
    </alternativeName>
    <alternativeName>
        <fullName evidence="1">ATPase subunit I</fullName>
    </alternativeName>
    <alternativeName>
        <fullName evidence="1">F-type ATPase subunit b</fullName>
        <shortName evidence="1">F-ATPase subunit b</shortName>
    </alternativeName>
</protein>
<organism>
    <name type="scientific">Trichormus variabilis (strain ATCC 29413 / PCC 7937)</name>
    <name type="common">Anabaena variabilis</name>
    <dbReference type="NCBI Taxonomy" id="240292"/>
    <lineage>
        <taxon>Bacteria</taxon>
        <taxon>Bacillati</taxon>
        <taxon>Cyanobacteriota</taxon>
        <taxon>Cyanophyceae</taxon>
        <taxon>Nostocales</taxon>
        <taxon>Nostocaceae</taxon>
        <taxon>Trichormus</taxon>
    </lineage>
</organism>
<dbReference type="EMBL" id="CP000117">
    <property type="protein sequence ID" value="ABA22228.1"/>
    <property type="molecule type" value="Genomic_DNA"/>
</dbReference>
<dbReference type="SMR" id="Q3M9V8"/>
<dbReference type="STRING" id="240292.Ava_2613"/>
<dbReference type="KEGG" id="ava:Ava_2613"/>
<dbReference type="eggNOG" id="COG0711">
    <property type="taxonomic scope" value="Bacteria"/>
</dbReference>
<dbReference type="HOGENOM" id="CLU_079215_8_1_3"/>
<dbReference type="Proteomes" id="UP000002533">
    <property type="component" value="Chromosome"/>
</dbReference>
<dbReference type="GO" id="GO:0031676">
    <property type="term" value="C:plasma membrane-derived thylakoid membrane"/>
    <property type="evidence" value="ECO:0007669"/>
    <property type="project" value="UniProtKB-SubCell"/>
</dbReference>
<dbReference type="GO" id="GO:0045259">
    <property type="term" value="C:proton-transporting ATP synthase complex"/>
    <property type="evidence" value="ECO:0007669"/>
    <property type="project" value="UniProtKB-KW"/>
</dbReference>
<dbReference type="GO" id="GO:0046933">
    <property type="term" value="F:proton-transporting ATP synthase activity, rotational mechanism"/>
    <property type="evidence" value="ECO:0007669"/>
    <property type="project" value="UniProtKB-UniRule"/>
</dbReference>
<dbReference type="CDD" id="cd06503">
    <property type="entry name" value="ATP-synt_Fo_b"/>
    <property type="match status" value="1"/>
</dbReference>
<dbReference type="HAMAP" id="MF_01398">
    <property type="entry name" value="ATP_synth_b_bprime"/>
    <property type="match status" value="1"/>
</dbReference>
<dbReference type="InterPro" id="IPR002146">
    <property type="entry name" value="ATP_synth_b/b'su_bac/chlpt"/>
</dbReference>
<dbReference type="NCBIfam" id="NF005606">
    <property type="entry name" value="PRK07352.1"/>
    <property type="match status" value="1"/>
</dbReference>
<dbReference type="PANTHER" id="PTHR34264">
    <property type="entry name" value="ATP SYNTHASE SUBUNIT B, CHLOROPLASTIC"/>
    <property type="match status" value="1"/>
</dbReference>
<dbReference type="PANTHER" id="PTHR34264:SF3">
    <property type="entry name" value="ATP SYNTHASE SUBUNIT B, CHLOROPLASTIC"/>
    <property type="match status" value="1"/>
</dbReference>
<dbReference type="Pfam" id="PF00430">
    <property type="entry name" value="ATP-synt_B"/>
    <property type="match status" value="1"/>
</dbReference>
<gene>
    <name evidence="1" type="primary">atpF</name>
    <name type="ordered locus">Ava_2613</name>
</gene>